<organism>
    <name type="scientific">Xylella fastidiosa (strain 9a5c)</name>
    <dbReference type="NCBI Taxonomy" id="160492"/>
    <lineage>
        <taxon>Bacteria</taxon>
        <taxon>Pseudomonadati</taxon>
        <taxon>Pseudomonadota</taxon>
        <taxon>Gammaproteobacteria</taxon>
        <taxon>Lysobacterales</taxon>
        <taxon>Lysobacteraceae</taxon>
        <taxon>Xylella</taxon>
    </lineage>
</organism>
<feature type="chain" id="PRO_0000083149" description="Biosynthetic peptidoglycan transglycosylase">
    <location>
        <begin position="1"/>
        <end position="243"/>
    </location>
</feature>
<feature type="transmembrane region" description="Helical" evidence="1">
    <location>
        <begin position="22"/>
        <end position="42"/>
    </location>
</feature>
<name>MTGA_XYLFA</name>
<gene>
    <name evidence="1" type="primary">mtgA</name>
    <name type="ordered locus">XF_1715</name>
</gene>
<sequence length="243" mass="28442">MYQWIQRDSDVYQRWPWWRRLLIVLLVLALMSVLQVIVFRFVDPPLSMTMVGRYLEAWSDRQWNFRLHYVWCDLEQIAPSVPISLVAAEDQRFPLHHGFDFDAIKKALGHHSRGGHLRGASTISQQVAKNLFLWSGRSFVRKGLEGWYTFWIELFWPKRRILEIYANIAEFGDGVYGVQAAAQRYLEKDAADLDESDAAQLAAVLPSPRRYNIQDPGPYIRWRSSWIQRQAEQLGGSAYLDMH</sequence>
<proteinExistence type="inferred from homology"/>
<protein>
    <recommendedName>
        <fullName evidence="1">Biosynthetic peptidoglycan transglycosylase</fullName>
        <ecNumber evidence="1">2.4.99.28</ecNumber>
    </recommendedName>
    <alternativeName>
        <fullName evidence="1">Glycan polymerase</fullName>
    </alternativeName>
    <alternativeName>
        <fullName evidence="1">Peptidoglycan glycosyltransferase MtgA</fullName>
        <shortName evidence="1">PGT</shortName>
    </alternativeName>
</protein>
<reference key="1">
    <citation type="journal article" date="2000" name="Nature">
        <title>The genome sequence of the plant pathogen Xylella fastidiosa.</title>
        <authorList>
            <person name="Simpson A.J.G."/>
            <person name="Reinach F.C."/>
            <person name="Arruda P."/>
            <person name="Abreu F.A."/>
            <person name="Acencio M."/>
            <person name="Alvarenga R."/>
            <person name="Alves L.M.C."/>
            <person name="Araya J.E."/>
            <person name="Baia G.S."/>
            <person name="Baptista C.S."/>
            <person name="Barros M.H."/>
            <person name="Bonaccorsi E.D."/>
            <person name="Bordin S."/>
            <person name="Bove J.M."/>
            <person name="Briones M.R.S."/>
            <person name="Bueno M.R.P."/>
            <person name="Camargo A.A."/>
            <person name="Camargo L.E.A."/>
            <person name="Carraro D.M."/>
            <person name="Carrer H."/>
            <person name="Colauto N.B."/>
            <person name="Colombo C."/>
            <person name="Costa F.F."/>
            <person name="Costa M.C.R."/>
            <person name="Costa-Neto C.M."/>
            <person name="Coutinho L.L."/>
            <person name="Cristofani M."/>
            <person name="Dias-Neto E."/>
            <person name="Docena C."/>
            <person name="El-Dorry H."/>
            <person name="Facincani A.P."/>
            <person name="Ferreira A.J.S."/>
            <person name="Ferreira V.C.A."/>
            <person name="Ferro J.A."/>
            <person name="Fraga J.S."/>
            <person name="Franca S.C."/>
            <person name="Franco M.C."/>
            <person name="Frohme M."/>
            <person name="Furlan L.R."/>
            <person name="Garnier M."/>
            <person name="Goldman G.H."/>
            <person name="Goldman M.H.S."/>
            <person name="Gomes S.L."/>
            <person name="Gruber A."/>
            <person name="Ho P.L."/>
            <person name="Hoheisel J.D."/>
            <person name="Junqueira M.L."/>
            <person name="Kemper E.L."/>
            <person name="Kitajima J.P."/>
            <person name="Krieger J.E."/>
            <person name="Kuramae E.E."/>
            <person name="Laigret F."/>
            <person name="Lambais M.R."/>
            <person name="Leite L.C.C."/>
            <person name="Lemos E.G.M."/>
            <person name="Lemos M.V.F."/>
            <person name="Lopes S.A."/>
            <person name="Lopes C.R."/>
            <person name="Machado J.A."/>
            <person name="Machado M.A."/>
            <person name="Madeira A.M.B.N."/>
            <person name="Madeira H.M.F."/>
            <person name="Marino C.L."/>
            <person name="Marques M.V."/>
            <person name="Martins E.A.L."/>
            <person name="Martins E.M.F."/>
            <person name="Matsukuma A.Y."/>
            <person name="Menck C.F.M."/>
            <person name="Miracca E.C."/>
            <person name="Miyaki C.Y."/>
            <person name="Monteiro-Vitorello C.B."/>
            <person name="Moon D.H."/>
            <person name="Nagai M.A."/>
            <person name="Nascimento A.L.T.O."/>
            <person name="Netto L.E.S."/>
            <person name="Nhani A. Jr."/>
            <person name="Nobrega F.G."/>
            <person name="Nunes L.R."/>
            <person name="Oliveira M.A."/>
            <person name="de Oliveira M.C."/>
            <person name="de Oliveira R.C."/>
            <person name="Palmieri D.A."/>
            <person name="Paris A."/>
            <person name="Peixoto B.R."/>
            <person name="Pereira G.A.G."/>
            <person name="Pereira H.A. Jr."/>
            <person name="Pesquero J.B."/>
            <person name="Quaggio R.B."/>
            <person name="Roberto P.G."/>
            <person name="Rodrigues V."/>
            <person name="de Rosa A.J.M."/>
            <person name="de Rosa V.E. Jr."/>
            <person name="de Sa R.G."/>
            <person name="Santelli R.V."/>
            <person name="Sawasaki H.E."/>
            <person name="da Silva A.C.R."/>
            <person name="da Silva A.M."/>
            <person name="da Silva F.R."/>
            <person name="Silva W.A. Jr."/>
            <person name="da Silveira J.F."/>
            <person name="Silvestri M.L.Z."/>
            <person name="Siqueira W.J."/>
            <person name="de Souza A.A."/>
            <person name="de Souza A.P."/>
            <person name="Terenzi M.F."/>
            <person name="Truffi D."/>
            <person name="Tsai S.M."/>
            <person name="Tsuhako M.H."/>
            <person name="Vallada H."/>
            <person name="Van Sluys M.A."/>
            <person name="Verjovski-Almeida S."/>
            <person name="Vettore A.L."/>
            <person name="Zago M.A."/>
            <person name="Zatz M."/>
            <person name="Meidanis J."/>
            <person name="Setubal J.C."/>
        </authorList>
    </citation>
    <scope>NUCLEOTIDE SEQUENCE [LARGE SCALE GENOMIC DNA]</scope>
    <source>
        <strain>9a5c</strain>
    </source>
</reference>
<keyword id="KW-0997">Cell inner membrane</keyword>
<keyword id="KW-1003">Cell membrane</keyword>
<keyword id="KW-0133">Cell shape</keyword>
<keyword id="KW-0961">Cell wall biogenesis/degradation</keyword>
<keyword id="KW-0328">Glycosyltransferase</keyword>
<keyword id="KW-0472">Membrane</keyword>
<keyword id="KW-0573">Peptidoglycan synthesis</keyword>
<keyword id="KW-0808">Transferase</keyword>
<keyword id="KW-0812">Transmembrane</keyword>
<keyword id="KW-1133">Transmembrane helix</keyword>
<evidence type="ECO:0000255" key="1">
    <source>
        <dbReference type="HAMAP-Rule" id="MF_00766"/>
    </source>
</evidence>
<evidence type="ECO:0000305" key="2"/>
<comment type="function">
    <text evidence="1">Peptidoglycan polymerase that catalyzes glycan chain elongation from lipid-linked precursors.</text>
</comment>
<comment type="catalytic activity">
    <reaction evidence="1">
        <text>[GlcNAc-(1-&gt;4)-Mur2Ac(oyl-L-Ala-gamma-D-Glu-L-Lys-D-Ala-D-Ala)](n)-di-trans,octa-cis-undecaprenyl diphosphate + beta-D-GlcNAc-(1-&gt;4)-Mur2Ac(oyl-L-Ala-gamma-D-Glu-L-Lys-D-Ala-D-Ala)-di-trans,octa-cis-undecaprenyl diphosphate = [GlcNAc-(1-&gt;4)-Mur2Ac(oyl-L-Ala-gamma-D-Glu-L-Lys-D-Ala-D-Ala)](n+1)-di-trans,octa-cis-undecaprenyl diphosphate + di-trans,octa-cis-undecaprenyl diphosphate + H(+)</text>
        <dbReference type="Rhea" id="RHEA:23708"/>
        <dbReference type="Rhea" id="RHEA-COMP:9602"/>
        <dbReference type="Rhea" id="RHEA-COMP:9603"/>
        <dbReference type="ChEBI" id="CHEBI:15378"/>
        <dbReference type="ChEBI" id="CHEBI:58405"/>
        <dbReference type="ChEBI" id="CHEBI:60033"/>
        <dbReference type="ChEBI" id="CHEBI:78435"/>
        <dbReference type="EC" id="2.4.99.28"/>
    </reaction>
</comment>
<comment type="pathway">
    <text evidence="1">Cell wall biogenesis; peptidoglycan biosynthesis.</text>
</comment>
<comment type="subcellular location">
    <subcellularLocation>
        <location evidence="1">Cell inner membrane</location>
        <topology evidence="1">Single-pass membrane protein</topology>
    </subcellularLocation>
</comment>
<comment type="similarity">
    <text evidence="1">Belongs to the glycosyltransferase 51 family.</text>
</comment>
<comment type="sequence caution" evidence="2">
    <conflict type="erroneous initiation">
        <sequence resource="EMBL-CDS" id="AAF84524"/>
    </conflict>
</comment>
<accession>Q9PCR3</accession>
<dbReference type="EC" id="2.4.99.28" evidence="1"/>
<dbReference type="EMBL" id="AE003849">
    <property type="protein sequence ID" value="AAF84524.1"/>
    <property type="status" value="ALT_INIT"/>
    <property type="molecule type" value="Genomic_DNA"/>
</dbReference>
<dbReference type="PIR" id="F82646">
    <property type="entry name" value="F82646"/>
</dbReference>
<dbReference type="SMR" id="Q9PCR3"/>
<dbReference type="STRING" id="160492.XF_1715"/>
<dbReference type="CAZy" id="GT51">
    <property type="family name" value="Glycosyltransferase Family 51"/>
</dbReference>
<dbReference type="KEGG" id="xfa:XF_1715"/>
<dbReference type="eggNOG" id="COG0744">
    <property type="taxonomic scope" value="Bacteria"/>
</dbReference>
<dbReference type="HOGENOM" id="CLU_006354_1_1_6"/>
<dbReference type="UniPathway" id="UPA00219"/>
<dbReference type="Proteomes" id="UP000000812">
    <property type="component" value="Chromosome"/>
</dbReference>
<dbReference type="GO" id="GO:0009274">
    <property type="term" value="C:peptidoglycan-based cell wall"/>
    <property type="evidence" value="ECO:0007669"/>
    <property type="project" value="InterPro"/>
</dbReference>
<dbReference type="GO" id="GO:0005886">
    <property type="term" value="C:plasma membrane"/>
    <property type="evidence" value="ECO:0007669"/>
    <property type="project" value="UniProtKB-SubCell"/>
</dbReference>
<dbReference type="GO" id="GO:0016763">
    <property type="term" value="F:pentosyltransferase activity"/>
    <property type="evidence" value="ECO:0007669"/>
    <property type="project" value="InterPro"/>
</dbReference>
<dbReference type="GO" id="GO:0008955">
    <property type="term" value="F:peptidoglycan glycosyltransferase activity"/>
    <property type="evidence" value="ECO:0007669"/>
    <property type="project" value="UniProtKB-UniRule"/>
</dbReference>
<dbReference type="GO" id="GO:0004435">
    <property type="term" value="F:phosphatidylinositol-4,5-bisphosphate phospholipase C activity"/>
    <property type="evidence" value="ECO:0007669"/>
    <property type="project" value="InterPro"/>
</dbReference>
<dbReference type="GO" id="GO:0071555">
    <property type="term" value="P:cell wall organization"/>
    <property type="evidence" value="ECO:0007669"/>
    <property type="project" value="UniProtKB-KW"/>
</dbReference>
<dbReference type="GO" id="GO:0035556">
    <property type="term" value="P:intracellular signal transduction"/>
    <property type="evidence" value="ECO:0007669"/>
    <property type="project" value="InterPro"/>
</dbReference>
<dbReference type="GO" id="GO:0006629">
    <property type="term" value="P:lipid metabolic process"/>
    <property type="evidence" value="ECO:0007669"/>
    <property type="project" value="InterPro"/>
</dbReference>
<dbReference type="GO" id="GO:0009252">
    <property type="term" value="P:peptidoglycan biosynthetic process"/>
    <property type="evidence" value="ECO:0007669"/>
    <property type="project" value="UniProtKB-UniRule"/>
</dbReference>
<dbReference type="GO" id="GO:0008360">
    <property type="term" value="P:regulation of cell shape"/>
    <property type="evidence" value="ECO:0007669"/>
    <property type="project" value="UniProtKB-KW"/>
</dbReference>
<dbReference type="Gene3D" id="1.10.3810.10">
    <property type="entry name" value="Biosynthetic peptidoglycan transglycosylase-like"/>
    <property type="match status" value="1"/>
</dbReference>
<dbReference type="HAMAP" id="MF_00766">
    <property type="entry name" value="PGT_MtgA"/>
    <property type="match status" value="1"/>
</dbReference>
<dbReference type="InterPro" id="IPR001264">
    <property type="entry name" value="Glyco_trans_51"/>
</dbReference>
<dbReference type="InterPro" id="IPR023346">
    <property type="entry name" value="Lysozyme-like_dom_sf"/>
</dbReference>
<dbReference type="InterPro" id="IPR036950">
    <property type="entry name" value="PBP_transglycosylase"/>
</dbReference>
<dbReference type="InterPro" id="IPR011812">
    <property type="entry name" value="Pep_trsgly"/>
</dbReference>
<dbReference type="InterPro" id="IPR001711">
    <property type="entry name" value="PLipase_C_Pinositol-sp_Y"/>
</dbReference>
<dbReference type="NCBIfam" id="TIGR02070">
    <property type="entry name" value="mono_pep_trsgly"/>
    <property type="match status" value="1"/>
</dbReference>
<dbReference type="PANTHER" id="PTHR30400:SF0">
    <property type="entry name" value="BIOSYNTHETIC PEPTIDOGLYCAN TRANSGLYCOSYLASE"/>
    <property type="match status" value="1"/>
</dbReference>
<dbReference type="PANTHER" id="PTHR30400">
    <property type="entry name" value="MONOFUNCTIONAL BIOSYNTHETIC PEPTIDOGLYCAN TRANSGLYCOSYLASE"/>
    <property type="match status" value="1"/>
</dbReference>
<dbReference type="Pfam" id="PF00912">
    <property type="entry name" value="Transgly"/>
    <property type="match status" value="1"/>
</dbReference>
<dbReference type="SUPFAM" id="SSF53955">
    <property type="entry name" value="Lysozyme-like"/>
    <property type="match status" value="1"/>
</dbReference>